<organism>
    <name type="scientific">Homo sapiens</name>
    <name type="common">Human</name>
    <dbReference type="NCBI Taxonomy" id="9606"/>
    <lineage>
        <taxon>Eukaryota</taxon>
        <taxon>Metazoa</taxon>
        <taxon>Chordata</taxon>
        <taxon>Craniata</taxon>
        <taxon>Vertebrata</taxon>
        <taxon>Euteleostomi</taxon>
        <taxon>Mammalia</taxon>
        <taxon>Eutheria</taxon>
        <taxon>Euarchontoglires</taxon>
        <taxon>Primates</taxon>
        <taxon>Haplorrhini</taxon>
        <taxon>Catarrhini</taxon>
        <taxon>Hominidae</taxon>
        <taxon>Homo</taxon>
    </lineage>
</organism>
<keyword id="KW-0002">3D-structure</keyword>
<keyword id="KW-0238">DNA-binding</keyword>
<keyword id="KW-0479">Metal-binding</keyword>
<keyword id="KW-0539">Nucleus</keyword>
<keyword id="KW-0597">Phosphoprotein</keyword>
<keyword id="KW-1267">Proteomics identification</keyword>
<keyword id="KW-1185">Reference proteome</keyword>
<keyword id="KW-0677">Repeat</keyword>
<keyword id="KW-0804">Transcription</keyword>
<keyword id="KW-0805">Transcription regulation</keyword>
<keyword id="KW-0862">Zinc</keyword>
<keyword id="KW-0863">Zinc-finger</keyword>
<dbReference type="EMBL" id="AL118506">
    <property type="status" value="NOT_ANNOTATED_CDS"/>
    <property type="molecule type" value="Genomic_DNA"/>
</dbReference>
<dbReference type="EMBL" id="BC125128">
    <property type="protein sequence ID" value="AAI25129.1"/>
    <property type="molecule type" value="mRNA"/>
</dbReference>
<dbReference type="EMBL" id="BC125129">
    <property type="protein sequence ID" value="AAI25130.1"/>
    <property type="molecule type" value="mRNA"/>
</dbReference>
<dbReference type="EMBL" id="AB033022">
    <property type="protein sequence ID" value="BAA86510.1"/>
    <property type="molecule type" value="mRNA"/>
</dbReference>
<dbReference type="EMBL" id="AL834525">
    <property type="protein sequence ID" value="CAD39181.1"/>
    <property type="molecule type" value="mRNA"/>
</dbReference>
<dbReference type="CCDS" id="CCDS13548.1"/>
<dbReference type="RefSeq" id="NP_065764.1">
    <property type="nucleotide sequence ID" value="NM_020713.3"/>
</dbReference>
<dbReference type="RefSeq" id="XP_011527231.1">
    <property type="nucleotide sequence ID" value="XM_011528929.2"/>
</dbReference>
<dbReference type="RefSeq" id="XP_047296283.1">
    <property type="nucleotide sequence ID" value="XM_047440327.1"/>
</dbReference>
<dbReference type="RefSeq" id="XP_054179743.1">
    <property type="nucleotide sequence ID" value="XM_054323768.1"/>
</dbReference>
<dbReference type="PDB" id="2GQJ">
    <property type="method" value="NMR"/>
    <property type="chains" value="A=493-577"/>
</dbReference>
<dbReference type="PDB" id="8TX8">
    <property type="method" value="X-ray"/>
    <property type="resolution" value="2.20 A"/>
    <property type="chains" value="C/D=419-430"/>
</dbReference>
<dbReference type="PDBsum" id="2GQJ"/>
<dbReference type="PDBsum" id="8TX8"/>
<dbReference type="SMR" id="Q96KM6"/>
<dbReference type="BioGRID" id="121543">
    <property type="interactions" value="199"/>
</dbReference>
<dbReference type="FunCoup" id="Q96KM6">
    <property type="interactions" value="1402"/>
</dbReference>
<dbReference type="IntAct" id="Q96KM6">
    <property type="interactions" value="128"/>
</dbReference>
<dbReference type="MINT" id="Q96KM6"/>
<dbReference type="STRING" id="9606.ENSP00000358904"/>
<dbReference type="GlyCosmos" id="Q96KM6">
    <property type="glycosylation" value="6 sites, 2 glycans"/>
</dbReference>
<dbReference type="GlyGen" id="Q96KM6">
    <property type="glycosylation" value="18 sites, 2 O-linked glycans (18 sites)"/>
</dbReference>
<dbReference type="iPTMnet" id="Q96KM6"/>
<dbReference type="PhosphoSitePlus" id="Q96KM6"/>
<dbReference type="BioMuta" id="ZNF512B"/>
<dbReference type="DMDM" id="23822331"/>
<dbReference type="jPOST" id="Q96KM6"/>
<dbReference type="MassIVE" id="Q96KM6"/>
<dbReference type="PaxDb" id="9606-ENSP00000393795"/>
<dbReference type="PeptideAtlas" id="Q96KM6"/>
<dbReference type="ProteomicsDB" id="77083"/>
<dbReference type="Pumba" id="Q96KM6"/>
<dbReference type="Antibodypedia" id="29948">
    <property type="antibodies" value="109 antibodies from 16 providers"/>
</dbReference>
<dbReference type="DNASU" id="57473"/>
<dbReference type="Ensembl" id="ENST00000369888.6">
    <property type="protein sequence ID" value="ENSP00000358904.1"/>
    <property type="gene ID" value="ENSG00000196700.9"/>
</dbReference>
<dbReference type="GeneID" id="57473"/>
<dbReference type="KEGG" id="hsa:57473"/>
<dbReference type="MANE-Select" id="ENST00000369888.6">
    <property type="protein sequence ID" value="ENSP00000358904.1"/>
    <property type="RefSeq nucleotide sequence ID" value="NM_020713.3"/>
    <property type="RefSeq protein sequence ID" value="NP_065764.1"/>
</dbReference>
<dbReference type="UCSC" id="uc002yhl.3">
    <property type="organism name" value="human"/>
</dbReference>
<dbReference type="AGR" id="HGNC:29212"/>
<dbReference type="CTD" id="57473"/>
<dbReference type="DisGeNET" id="57473"/>
<dbReference type="GeneCards" id="ZNF512B"/>
<dbReference type="HGNC" id="HGNC:29212">
    <property type="gene designation" value="ZNF512B"/>
</dbReference>
<dbReference type="HPA" id="ENSG00000196700">
    <property type="expression patterns" value="Low tissue specificity"/>
</dbReference>
<dbReference type="MIM" id="617886">
    <property type="type" value="gene"/>
</dbReference>
<dbReference type="neXtProt" id="NX_Q96KM6"/>
<dbReference type="OpenTargets" id="ENSG00000196700"/>
<dbReference type="PharmGKB" id="PA162410181"/>
<dbReference type="VEuPathDB" id="HostDB:ENSG00000196700"/>
<dbReference type="eggNOG" id="KOG1721">
    <property type="taxonomic scope" value="Eukaryota"/>
</dbReference>
<dbReference type="GeneTree" id="ENSGT00940000159165"/>
<dbReference type="HOGENOM" id="CLU_020005_1_0_1"/>
<dbReference type="InParanoid" id="Q96KM6"/>
<dbReference type="OMA" id="NEGCTAN"/>
<dbReference type="OrthoDB" id="7463797at2759"/>
<dbReference type="PAN-GO" id="Q96KM6">
    <property type="GO annotations" value="0 GO annotations based on evolutionary models"/>
</dbReference>
<dbReference type="PhylomeDB" id="Q96KM6"/>
<dbReference type="TreeFam" id="TF331185"/>
<dbReference type="PathwayCommons" id="Q96KM6"/>
<dbReference type="Reactome" id="R-HSA-9013424">
    <property type="pathway name" value="RHOV GTPase cycle"/>
</dbReference>
<dbReference type="SignaLink" id="Q96KM6"/>
<dbReference type="BioGRID-ORCS" id="57473">
    <property type="hits" value="27 hits in 1174 CRISPR screens"/>
</dbReference>
<dbReference type="ChiTaRS" id="ZNF512B">
    <property type="organism name" value="human"/>
</dbReference>
<dbReference type="EvolutionaryTrace" id="Q96KM6"/>
<dbReference type="GenomeRNAi" id="57473"/>
<dbReference type="Pharos" id="Q96KM6">
    <property type="development level" value="Tbio"/>
</dbReference>
<dbReference type="PRO" id="PR:Q96KM6"/>
<dbReference type="Proteomes" id="UP000005640">
    <property type="component" value="Chromosome 20"/>
</dbReference>
<dbReference type="RNAct" id="Q96KM6">
    <property type="molecule type" value="protein"/>
</dbReference>
<dbReference type="Bgee" id="ENSG00000196700">
    <property type="expression patterns" value="Expressed in parotid gland and 190 other cell types or tissues"/>
</dbReference>
<dbReference type="GO" id="GO:0005654">
    <property type="term" value="C:nucleoplasm"/>
    <property type="evidence" value="ECO:0000314"/>
    <property type="project" value="HPA"/>
</dbReference>
<dbReference type="GO" id="GO:0001227">
    <property type="term" value="F:DNA-binding transcription repressor activity, RNA polymerase II-specific"/>
    <property type="evidence" value="ECO:0000314"/>
    <property type="project" value="ARUK-UCL"/>
</dbReference>
<dbReference type="GO" id="GO:0000977">
    <property type="term" value="F:RNA polymerase II transcription regulatory region sequence-specific DNA binding"/>
    <property type="evidence" value="ECO:0000314"/>
    <property type="project" value="ARUK-UCL"/>
</dbReference>
<dbReference type="GO" id="GO:0008270">
    <property type="term" value="F:zinc ion binding"/>
    <property type="evidence" value="ECO:0007669"/>
    <property type="project" value="UniProtKB-KW"/>
</dbReference>
<dbReference type="GO" id="GO:1902894">
    <property type="term" value="P:negative regulation of miRNA transcription"/>
    <property type="evidence" value="ECO:0000314"/>
    <property type="project" value="ARUK-UCL"/>
</dbReference>
<dbReference type="FunFam" id="3.30.160.60:FF:000177">
    <property type="entry name" value="Zinc finger protein 512"/>
    <property type="match status" value="1"/>
</dbReference>
<dbReference type="FunFam" id="3.30.160.60:FF:000270">
    <property type="entry name" value="Zinc finger protein 512"/>
    <property type="match status" value="1"/>
</dbReference>
<dbReference type="FunFam" id="3.30.160.60:FF:000820">
    <property type="entry name" value="Zinc finger protein 512B"/>
    <property type="match status" value="1"/>
</dbReference>
<dbReference type="FunFam" id="3.30.160.60:FF:000857">
    <property type="entry name" value="Zinc finger protein 512B"/>
    <property type="match status" value="1"/>
</dbReference>
<dbReference type="Gene3D" id="3.30.160.60">
    <property type="entry name" value="Classic Zinc Finger"/>
    <property type="match status" value="4"/>
</dbReference>
<dbReference type="InterPro" id="IPR052274">
    <property type="entry name" value="Krueppel_C2H2_Zn-finger"/>
</dbReference>
<dbReference type="InterPro" id="IPR048408">
    <property type="entry name" value="ZNF512_C2HC"/>
</dbReference>
<dbReference type="InterPro" id="IPR036236">
    <property type="entry name" value="Znf_C2H2_sf"/>
</dbReference>
<dbReference type="InterPro" id="IPR013087">
    <property type="entry name" value="Znf_C2H2_type"/>
</dbReference>
<dbReference type="PANTHER" id="PTHR22979:SF3">
    <property type="entry name" value="ZINC FINGER PROTEIN 512B"/>
    <property type="match status" value="1"/>
</dbReference>
<dbReference type="PANTHER" id="PTHR22979">
    <property type="entry name" value="ZINC FINGER PROTEIN-RELATED"/>
    <property type="match status" value="1"/>
</dbReference>
<dbReference type="Pfam" id="PF00096">
    <property type="entry name" value="zf-C2H2"/>
    <property type="match status" value="1"/>
</dbReference>
<dbReference type="Pfam" id="PF21276">
    <property type="entry name" value="ZNF512_C2HC"/>
    <property type="match status" value="2"/>
</dbReference>
<dbReference type="SMART" id="SM00355">
    <property type="entry name" value="ZnF_C2H2"/>
    <property type="match status" value="6"/>
</dbReference>
<dbReference type="SUPFAM" id="SSF57667">
    <property type="entry name" value="beta-beta-alpha zinc fingers"/>
    <property type="match status" value="7"/>
</dbReference>
<dbReference type="PROSITE" id="PS00028">
    <property type="entry name" value="ZINC_FINGER_C2H2_1"/>
    <property type="match status" value="4"/>
</dbReference>
<dbReference type="PROSITE" id="PS50157">
    <property type="entry name" value="ZINC_FINGER_C2H2_2"/>
    <property type="match status" value="4"/>
</dbReference>
<name>Z512B_HUMAN</name>
<comment type="function">
    <text evidence="3">Involved in transcriptional regulation by repressing gene expression (PubMed:39460621). Associates with the nucleosome remodeling and histone deacetylase (NuRD) complex, which promotes transcriptional repression by histone deacetylation and nucleosome remodeling (PubMed:39460621).</text>
</comment>
<comment type="subunit">
    <text evidence="3">Interacts (via its NuRD interaction motif) with RBBP4 of the nucleosome remodeling and deacetylase (NuRD) complex; the interaction is direct and may play a role in repressing gene expression.</text>
</comment>
<comment type="interaction">
    <interactant intactId="EBI-1049952">
        <id>Q96KM6</id>
    </interactant>
    <interactant intactId="EBI-949782">
        <id>Q96IF1</id>
        <label>AJUBA</label>
    </interactant>
    <organismsDiffer>false</organismsDiffer>
    <experiments>3</experiments>
</comment>
<comment type="interaction">
    <interactant intactId="EBI-1049952">
        <id>Q96KM6</id>
    </interactant>
    <interactant intactId="EBI-11524452">
        <id>Q8N9N5-2</id>
        <label>BANP</label>
    </interactant>
    <organismsDiffer>false</organismsDiffer>
    <experiments>3</experiments>
</comment>
<comment type="interaction">
    <interactant intactId="EBI-1049952">
        <id>Q96KM6</id>
    </interactant>
    <interactant intactId="EBI-12002214">
        <id>Q9H3H3-3</id>
        <label>C11orf68</label>
    </interactant>
    <organismsDiffer>false</organismsDiffer>
    <experiments>3</experiments>
</comment>
<comment type="interaction">
    <interactant intactId="EBI-1049952">
        <id>Q96KM6</id>
    </interactant>
    <interactant intactId="EBI-741101">
        <id>Q13643</id>
        <label>FHL3</label>
    </interactant>
    <organismsDiffer>false</organismsDiffer>
    <experiments>10</experiments>
</comment>
<comment type="interaction">
    <interactant intactId="EBI-1049952">
        <id>Q96KM6</id>
    </interactant>
    <interactant intactId="EBI-618309">
        <id>Q08379</id>
        <label>GOLGA2</label>
    </interactant>
    <organismsDiffer>false</organismsDiffer>
    <experiments>3</experiments>
</comment>
<comment type="interaction">
    <interactant intactId="EBI-1049952">
        <id>Q96KM6</id>
    </interactant>
    <interactant intactId="EBI-724076">
        <id>Q99750</id>
        <label>MDFI</label>
    </interactant>
    <organismsDiffer>false</organismsDiffer>
    <experiments>3</experiments>
</comment>
<comment type="interaction">
    <interactant intactId="EBI-1049952">
        <id>Q96KM6</id>
    </interactant>
    <interactant intactId="EBI-16439278">
        <id>Q6FHY5</id>
        <label>MEOX2</label>
    </interactant>
    <organismsDiffer>false</organismsDiffer>
    <experiments>3</experiments>
</comment>
<comment type="interaction">
    <interactant intactId="EBI-1049952">
        <id>Q96KM6</id>
    </interactant>
    <interactant intactId="EBI-11522433">
        <id>Q5JR59-3</id>
        <label>MTUS2</label>
    </interactant>
    <organismsDiffer>false</organismsDiffer>
    <experiments>3</experiments>
</comment>
<comment type="interaction">
    <interactant intactId="EBI-1049952">
        <id>Q96KM6</id>
    </interactant>
    <interactant intactId="EBI-7950997">
        <id>Q96RE7</id>
        <label>NACC1</label>
    </interactant>
    <organismsDiffer>false</organismsDiffer>
    <experiments>3</experiments>
</comment>
<comment type="interaction">
    <interactant intactId="EBI-1049952">
        <id>Q96KM6</id>
    </interactant>
    <interactant intactId="EBI-447043">
        <id>Q15276</id>
        <label>RABEP1</label>
    </interactant>
    <organismsDiffer>false</organismsDiffer>
    <experiments>3</experiments>
</comment>
<comment type="interaction">
    <interactant intactId="EBI-1049952">
        <id>Q96KM6</id>
    </interactant>
    <interactant intactId="EBI-747107">
        <id>Q8IUQ4</id>
        <label>SIAH1</label>
    </interactant>
    <organismsDiffer>false</organismsDiffer>
    <experiments>3</experiments>
</comment>
<comment type="interaction">
    <interactant intactId="EBI-1049952">
        <id>Q96KM6</id>
    </interactant>
    <interactant intactId="EBI-359224">
        <id>Q13077</id>
        <label>TRAF1</label>
    </interactant>
    <organismsDiffer>false</organismsDiffer>
    <experiments>7</experiments>
</comment>
<comment type="interaction">
    <interactant intactId="EBI-1049952">
        <id>Q96KM6</id>
    </interactant>
    <interactant intactId="EBI-2849334">
        <id>P52747</id>
        <label>ZNF143</label>
    </interactant>
    <organismsDiffer>false</organismsDiffer>
    <experiments>3</experiments>
</comment>
<comment type="interaction">
    <interactant intactId="EBI-1049952">
        <id>Q96KM6</id>
    </interactant>
    <interactant intactId="EBI-444225">
        <id>Q15942</id>
        <label>ZYX</label>
    </interactant>
    <organismsDiffer>false</organismsDiffer>
    <experiments>3</experiments>
</comment>
<comment type="subcellular location">
    <subcellularLocation>
        <location evidence="3">Nucleus</location>
    </subcellularLocation>
    <text evidence="3">Colocalizes with chromatin.</text>
</comment>
<comment type="similarity">
    <text evidence="5">Belongs to the krueppel C2H2-type zinc-finger protein family.</text>
</comment>
<feature type="chain" id="PRO_0000047779" description="Zinc finger protein 512B">
    <location>
        <begin position="1"/>
        <end position="892"/>
    </location>
</feature>
<feature type="zinc finger region" description="C2H2-type 1; atypical" evidence="1">
    <location>
        <begin position="105"/>
        <end position="129"/>
    </location>
</feature>
<feature type="zinc finger region" description="C2H2-type 2" evidence="1">
    <location>
        <begin position="140"/>
        <end position="163"/>
    </location>
</feature>
<feature type="zinc finger region" description="C2H2-type 3" evidence="1">
    <location>
        <begin position="540"/>
        <end position="563"/>
    </location>
</feature>
<feature type="zinc finger region" description="C2H2-type 4; atypical" evidence="1">
    <location>
        <begin position="594"/>
        <end position="618"/>
    </location>
</feature>
<feature type="zinc finger region" description="C2H2-type 5" evidence="1">
    <location>
        <begin position="630"/>
        <end position="653"/>
    </location>
</feature>
<feature type="zinc finger region" description="C2H2-type 6; atypical" evidence="1">
    <location>
        <begin position="750"/>
        <end position="774"/>
    </location>
</feature>
<feature type="zinc finger region" description="C2H2-type 7" evidence="1">
    <location>
        <begin position="784"/>
        <end position="807"/>
    </location>
</feature>
<feature type="region of interest" description="Disordered" evidence="2">
    <location>
        <begin position="1"/>
        <end position="82"/>
    </location>
</feature>
<feature type="region of interest" description="Disordered" evidence="2">
    <location>
        <begin position="323"/>
        <end position="473"/>
    </location>
</feature>
<feature type="region of interest" description="Disordered" evidence="2">
    <location>
        <begin position="562"/>
        <end position="582"/>
    </location>
</feature>
<feature type="region of interest" description="Disordered" evidence="2">
    <location>
        <begin position="649"/>
        <end position="682"/>
    </location>
</feature>
<feature type="region of interest" description="Disordered" evidence="2">
    <location>
        <begin position="812"/>
        <end position="892"/>
    </location>
</feature>
<feature type="short sequence motif" description="NuRD interaction motif" evidence="3">
    <location>
        <begin position="421"/>
        <end position="427"/>
    </location>
</feature>
<feature type="compositionally biased region" description="Low complexity" evidence="2">
    <location>
        <begin position="8"/>
        <end position="19"/>
    </location>
</feature>
<feature type="compositionally biased region" description="Polar residues" evidence="2">
    <location>
        <begin position="371"/>
        <end position="384"/>
    </location>
</feature>
<feature type="compositionally biased region" description="Low complexity" evidence="2">
    <location>
        <begin position="385"/>
        <end position="398"/>
    </location>
</feature>
<feature type="compositionally biased region" description="Basic residues" evidence="2">
    <location>
        <begin position="418"/>
        <end position="428"/>
    </location>
</feature>
<feature type="compositionally biased region" description="Basic and acidic residues" evidence="2">
    <location>
        <begin position="819"/>
        <end position="831"/>
    </location>
</feature>
<feature type="compositionally biased region" description="Basic residues" evidence="2">
    <location>
        <begin position="832"/>
        <end position="849"/>
    </location>
</feature>
<feature type="compositionally biased region" description="Basic and acidic residues" evidence="2">
    <location>
        <begin position="850"/>
        <end position="876"/>
    </location>
</feature>
<feature type="modified residue" description="Phosphoserine" evidence="7">
    <location>
        <position position="409"/>
    </location>
</feature>
<feature type="modified residue" description="Phosphoserine" evidence="8">
    <location>
        <position position="686"/>
    </location>
</feature>
<feature type="sequence variant" id="VAR_061954" description="In dbSNP:rs45486695.">
    <original>V</original>
    <variation>M</variation>
    <location>
        <position position="288"/>
    </location>
</feature>
<feature type="sequence variant" id="VAR_024226" description="In dbSNP:rs817326.">
    <original>M</original>
    <variation>V</variation>
    <location>
        <position position="372"/>
    </location>
</feature>
<feature type="sequence variant" id="VAR_024227" description="In dbSNP:rs6062599.">
    <original>A</original>
    <variation>T</variation>
    <location>
        <position position="453"/>
    </location>
</feature>
<feature type="mutagenesis site" description="Abolishes interaction with the NuRD complex." evidence="3">
    <original>R</original>
    <variation>A</variation>
    <location>
        <position position="422"/>
    </location>
</feature>
<feature type="mutagenesis site" description="Abolishes interaction with the NuRD complex and impairs repression of gene expression." evidence="3">
    <original>K</original>
    <variation>A</variation>
    <location>
        <position position="423"/>
    </location>
</feature>
<feature type="mutagenesis site" description="Impairs interaction with the NuRD complex." evidence="3">
    <original>Q</original>
    <variation>A</variation>
    <location>
        <position position="424"/>
    </location>
</feature>
<feature type="mutagenesis site" description="Abolishes interaction with the NuRD complex." evidence="3">
    <original>P</original>
    <variation>A</variation>
    <location>
        <position position="427"/>
    </location>
</feature>
<feature type="helix" evidence="9">
    <location>
        <begin position="499"/>
        <end position="502"/>
    </location>
</feature>
<feature type="turn" evidence="9">
    <location>
        <begin position="503"/>
        <end position="507"/>
    </location>
</feature>
<feature type="turn" evidence="9">
    <location>
        <begin position="513"/>
        <end position="515"/>
    </location>
</feature>
<feature type="helix" evidence="9">
    <location>
        <begin position="524"/>
        <end position="540"/>
    </location>
</feature>
<feature type="strand" evidence="9">
    <location>
        <begin position="543"/>
        <end position="545"/>
    </location>
</feature>
<feature type="helix" evidence="9">
    <location>
        <begin position="552"/>
        <end position="562"/>
    </location>
</feature>
<gene>
    <name type="primary">ZNF512B</name>
    <name type="synonym">KIAA1196</name>
</gene>
<evidence type="ECO:0000255" key="1">
    <source>
        <dbReference type="PROSITE-ProRule" id="PRU00042"/>
    </source>
</evidence>
<evidence type="ECO:0000256" key="2">
    <source>
        <dbReference type="SAM" id="MobiDB-lite"/>
    </source>
</evidence>
<evidence type="ECO:0000269" key="3">
    <source>
    </source>
</evidence>
<evidence type="ECO:0000303" key="4">
    <source>
    </source>
</evidence>
<evidence type="ECO:0000305" key="5"/>
<evidence type="ECO:0007744" key="6">
    <source>
        <dbReference type="PDB" id="8TX8"/>
    </source>
</evidence>
<evidence type="ECO:0007744" key="7">
    <source>
    </source>
</evidence>
<evidence type="ECO:0007744" key="8">
    <source>
    </source>
</evidence>
<evidence type="ECO:0007829" key="9">
    <source>
        <dbReference type="PDB" id="2GQJ"/>
    </source>
</evidence>
<sequence>MTDPFCVGGRRLPGSSKSGPGKDGSRKEVRLPMLHDPPKMGMPVVRGGQTVPGQAPLCFDPGSPASDKTEGKKKGRPKAENQALRDIPLSLMNDWKDEFKAHSRVKCPNSGCWLEFPSIYGLKYHYQRCQGGAISDRLAFPCPFCEAAFTSKTQLEKHRIWNHMDRPLPASKPGPISRPVTISRPVGVSKPIGVSKPVTIGKPVGVSKPIGISKPVSVGRPMPVTKAIPVTRPVPVTKPVTVSRPMPVTKAMPVTKPITVTKSVPVTKPVPVTKPITVTKLVTVTKPVPVTKPVTVSRPIVVSKPVTVSRPIAISRHTPPCKMVLLTRSENKAPRATGRNSGKKRAADSLDTCPIPPKQARPENGEYGPSSMGQSSAFQLSADTSSGSLSPGSRPSGGMEALKAAGPASPPEEDPERTKHRRKQKTPKKFTGEQPSISGTFGLKGLVKAEDKARVHRSKKQEGPGPEDARKKVPAAPITVSKEAPAPVAHPAPGGPEEQWQRAIHERGEAVCPTCNVVTRKTLVGLKKHMEVCQKLQDALKCQHCRKQFKSKAGLNYHTMAEHSAKPSDAEASEGGEQEERERLRKVLKQMGRLRCPQEGCGAAFSSLMGYQYHQRRCGKPPCEVDSPSFPCTHCGKTYRSKAGHDYHVRSEHTAPPPEEPTDKSPEAEDPLGVERTPSGRVRRTSAQVAVFHLQEIAEDELARDWTKRRMKDDLVPETARLNYTRPGLPTLNPQLLEAWKNEVKEKGHVNCPNDCCEAIYSSVSGLKAHLASCSKGAHLAGKYRCLLCPKEFSSESGVKYHILKTHAENWFRTSADPPPKHRSQDSLVPKKEKKKNLAGGKKRGRKPKERTPEEPVAKLPPRRDDWPPGCRDKGARGSTGRKVGVSKAPEK</sequence>
<proteinExistence type="evidence at protein level"/>
<reference key="1">
    <citation type="journal article" date="2001" name="Nature">
        <title>The DNA sequence and comparative analysis of human chromosome 20.</title>
        <authorList>
            <person name="Deloukas P."/>
            <person name="Matthews L.H."/>
            <person name="Ashurst J.L."/>
            <person name="Burton J."/>
            <person name="Gilbert J.G.R."/>
            <person name="Jones M."/>
            <person name="Stavrides G."/>
            <person name="Almeida J.P."/>
            <person name="Babbage A.K."/>
            <person name="Bagguley C.L."/>
            <person name="Bailey J."/>
            <person name="Barlow K.F."/>
            <person name="Bates K.N."/>
            <person name="Beard L.M."/>
            <person name="Beare D.M."/>
            <person name="Beasley O.P."/>
            <person name="Bird C.P."/>
            <person name="Blakey S.E."/>
            <person name="Bridgeman A.M."/>
            <person name="Brown A.J."/>
            <person name="Buck D."/>
            <person name="Burrill W.D."/>
            <person name="Butler A.P."/>
            <person name="Carder C."/>
            <person name="Carter N.P."/>
            <person name="Chapman J.C."/>
            <person name="Clamp M."/>
            <person name="Clark G."/>
            <person name="Clark L.N."/>
            <person name="Clark S.Y."/>
            <person name="Clee C.M."/>
            <person name="Clegg S."/>
            <person name="Cobley V.E."/>
            <person name="Collier R.E."/>
            <person name="Connor R.E."/>
            <person name="Corby N.R."/>
            <person name="Coulson A."/>
            <person name="Coville G.J."/>
            <person name="Deadman R."/>
            <person name="Dhami P.D."/>
            <person name="Dunn M."/>
            <person name="Ellington A.G."/>
            <person name="Frankland J.A."/>
            <person name="Fraser A."/>
            <person name="French L."/>
            <person name="Garner P."/>
            <person name="Grafham D.V."/>
            <person name="Griffiths C."/>
            <person name="Griffiths M.N.D."/>
            <person name="Gwilliam R."/>
            <person name="Hall R.E."/>
            <person name="Hammond S."/>
            <person name="Harley J.L."/>
            <person name="Heath P.D."/>
            <person name="Ho S."/>
            <person name="Holden J.L."/>
            <person name="Howden P.J."/>
            <person name="Huckle E."/>
            <person name="Hunt A.R."/>
            <person name="Hunt S.E."/>
            <person name="Jekosch K."/>
            <person name="Johnson C.M."/>
            <person name="Johnson D."/>
            <person name="Kay M.P."/>
            <person name="Kimberley A.M."/>
            <person name="King A."/>
            <person name="Knights A."/>
            <person name="Laird G.K."/>
            <person name="Lawlor S."/>
            <person name="Lehvaeslaiho M.H."/>
            <person name="Leversha M.A."/>
            <person name="Lloyd C."/>
            <person name="Lloyd D.M."/>
            <person name="Lovell J.D."/>
            <person name="Marsh V.L."/>
            <person name="Martin S.L."/>
            <person name="McConnachie L.J."/>
            <person name="McLay K."/>
            <person name="McMurray A.A."/>
            <person name="Milne S.A."/>
            <person name="Mistry D."/>
            <person name="Moore M.J.F."/>
            <person name="Mullikin J.C."/>
            <person name="Nickerson T."/>
            <person name="Oliver K."/>
            <person name="Parker A."/>
            <person name="Patel R."/>
            <person name="Pearce T.A.V."/>
            <person name="Peck A.I."/>
            <person name="Phillimore B.J.C.T."/>
            <person name="Prathalingam S.R."/>
            <person name="Plumb R.W."/>
            <person name="Ramsay H."/>
            <person name="Rice C.M."/>
            <person name="Ross M.T."/>
            <person name="Scott C.E."/>
            <person name="Sehra H.K."/>
            <person name="Shownkeen R."/>
            <person name="Sims S."/>
            <person name="Skuce C.D."/>
            <person name="Smith M.L."/>
            <person name="Soderlund C."/>
            <person name="Steward C.A."/>
            <person name="Sulston J.E."/>
            <person name="Swann R.M."/>
            <person name="Sycamore N."/>
            <person name="Taylor R."/>
            <person name="Tee L."/>
            <person name="Thomas D.W."/>
            <person name="Thorpe A."/>
            <person name="Tracey A."/>
            <person name="Tromans A.C."/>
            <person name="Vaudin M."/>
            <person name="Wall M."/>
            <person name="Wallis J.M."/>
            <person name="Whitehead S.L."/>
            <person name="Whittaker P."/>
            <person name="Willey D.L."/>
            <person name="Williams L."/>
            <person name="Williams S.A."/>
            <person name="Wilming L."/>
            <person name="Wray P.W."/>
            <person name="Hubbard T."/>
            <person name="Durbin R.M."/>
            <person name="Bentley D.R."/>
            <person name="Beck S."/>
            <person name="Rogers J."/>
        </authorList>
    </citation>
    <scope>NUCLEOTIDE SEQUENCE [LARGE SCALE GENOMIC DNA]</scope>
</reference>
<reference key="2">
    <citation type="journal article" date="2004" name="Genome Res.">
        <title>The status, quality, and expansion of the NIH full-length cDNA project: the Mammalian Gene Collection (MGC).</title>
        <authorList>
            <consortium name="The MGC Project Team"/>
        </authorList>
    </citation>
    <scope>NUCLEOTIDE SEQUENCE [LARGE SCALE MRNA]</scope>
</reference>
<reference key="3">
    <citation type="journal article" date="1999" name="DNA Res.">
        <title>Prediction of the coding sequences of unidentified human genes. XV. The complete sequences of 100 new cDNA clones from brain which code for large proteins in vitro.</title>
        <authorList>
            <person name="Nagase T."/>
            <person name="Ishikawa K."/>
            <person name="Kikuno R."/>
            <person name="Hirosawa M."/>
            <person name="Nomura N."/>
            <person name="Ohara O."/>
        </authorList>
    </citation>
    <scope>NUCLEOTIDE SEQUENCE [LARGE SCALE MRNA] OF 42-892</scope>
    <source>
        <tissue>Brain</tissue>
    </source>
</reference>
<reference key="4">
    <citation type="journal article" date="2007" name="BMC Genomics">
        <title>The full-ORF clone resource of the German cDNA consortium.</title>
        <authorList>
            <person name="Bechtel S."/>
            <person name="Rosenfelder H."/>
            <person name="Duda A."/>
            <person name="Schmidt C.P."/>
            <person name="Ernst U."/>
            <person name="Wellenreuther R."/>
            <person name="Mehrle A."/>
            <person name="Schuster C."/>
            <person name="Bahr A."/>
            <person name="Bloecker H."/>
            <person name="Heubner D."/>
            <person name="Hoerlein A."/>
            <person name="Michel G."/>
            <person name="Wedler H."/>
            <person name="Koehrer K."/>
            <person name="Ottenwaelder B."/>
            <person name="Poustka A."/>
            <person name="Wiemann S."/>
            <person name="Schupp I."/>
        </authorList>
    </citation>
    <scope>NUCLEOTIDE SEQUENCE [LARGE SCALE MRNA] OF 425-892</scope>
    <source>
        <tissue>Testis</tissue>
    </source>
</reference>
<reference key="5">
    <citation type="journal article" date="2006" name="Cell">
        <title>Global, in vivo, and site-specific phosphorylation dynamics in signaling networks.</title>
        <authorList>
            <person name="Olsen J.V."/>
            <person name="Blagoev B."/>
            <person name="Gnad F."/>
            <person name="Macek B."/>
            <person name="Kumar C."/>
            <person name="Mortensen P."/>
            <person name="Mann M."/>
        </authorList>
    </citation>
    <scope>PHOSPHORYLATION [LARGE SCALE ANALYSIS] AT SER-409</scope>
    <scope>IDENTIFICATION BY MASS SPECTROMETRY [LARGE SCALE ANALYSIS]</scope>
    <source>
        <tissue>Cervix carcinoma</tissue>
    </source>
</reference>
<reference key="6">
    <citation type="journal article" date="2008" name="Proc. Natl. Acad. Sci. U.S.A.">
        <title>A quantitative atlas of mitotic phosphorylation.</title>
        <authorList>
            <person name="Dephoure N."/>
            <person name="Zhou C."/>
            <person name="Villen J."/>
            <person name="Beausoleil S.A."/>
            <person name="Bakalarski C.E."/>
            <person name="Elledge S.J."/>
            <person name="Gygi S.P."/>
        </authorList>
    </citation>
    <scope>PHOSPHORYLATION [LARGE SCALE ANALYSIS] AT SER-686</scope>
    <scope>IDENTIFICATION BY MASS SPECTROMETRY [LARGE SCALE ANALYSIS]</scope>
    <source>
        <tissue>Cervix carcinoma</tissue>
    </source>
</reference>
<reference key="7">
    <citation type="journal article" date="2010" name="Sci. Signal.">
        <title>Quantitative phosphoproteomics reveals widespread full phosphorylation site occupancy during mitosis.</title>
        <authorList>
            <person name="Olsen J.V."/>
            <person name="Vermeulen M."/>
            <person name="Santamaria A."/>
            <person name="Kumar C."/>
            <person name="Miller M.L."/>
            <person name="Jensen L.J."/>
            <person name="Gnad F."/>
            <person name="Cox J."/>
            <person name="Jensen T.S."/>
            <person name="Nigg E.A."/>
            <person name="Brunak S."/>
            <person name="Mann M."/>
        </authorList>
    </citation>
    <scope>IDENTIFICATION BY MASS SPECTROMETRY [LARGE SCALE ANALYSIS]</scope>
    <source>
        <tissue>Cervix carcinoma</tissue>
    </source>
</reference>
<reference key="8">
    <citation type="submission" date="2006-10" db="PDB data bank">
        <title>Solution structure of the two ZF-C2H2-like domains (493-575) of human zinc finger protein KIAA1196.</title>
        <authorList>
            <consortium name="RIKEN structural genomics initiative (RSGI)"/>
        </authorList>
    </citation>
    <scope>STRUCTURE BY NMR OF 493-577</scope>
</reference>
<reference evidence="6" key="9">
    <citation type="journal article" date="2024" name="Nucleic Acids Res.">
        <title>ZNF512B binds RBBP4 via a variant NuRD interaction motif and aggregates chromatin in a NuRD complex-independent manner.</title>
        <authorList>
            <person name="Wunderlich T.M."/>
            <person name="Deshpande C."/>
            <person name="Paasche L.W."/>
            <person name="Friedrich T."/>
            <person name="Diegmueller F."/>
            <person name="Haddad E."/>
            <person name="Kreienbaum C."/>
            <person name="Naseer H."/>
            <person name="Stebel S.E."/>
            <person name="Daus N."/>
            <person name="Leers J."/>
            <person name="Lan J."/>
            <person name="Trinh V.T."/>
            <person name="Vazquez O."/>
            <person name="Butter F."/>
            <person name="Bartkuhn M."/>
            <person name="Mackay J.P."/>
            <person name="Hake S.B."/>
        </authorList>
    </citation>
    <scope>X-RAY CRYSTALLOGRAPHY (2.20 ANGSTROMS) OF 419-430 IN COMPLEX WITH RBBP4</scope>
    <scope>FUNCTION</scope>
    <scope>SUBUNIT</scope>
    <scope>SUBCELLULAR LOCATION</scope>
    <scope>MUTAGENESIS OF ARG-422; LYS-423; GLN-424 AND PRO-427</scope>
</reference>
<accession>Q96KM6</accession>
<accession>Q08AK9</accession>
<accession>Q9ULM4</accession>
<protein>
    <recommendedName>
        <fullName evidence="4">Zinc finger protein 512B</fullName>
    </recommendedName>
</protein>